<proteinExistence type="inferred from homology"/>
<feature type="chain" id="PRO_1000004155" description="Large ribosomal subunit protein bL33">
    <location>
        <begin position="1"/>
        <end position="60"/>
    </location>
</feature>
<reference key="1">
    <citation type="submission" date="2006-12" db="EMBL/GenBank/DDBJ databases">
        <title>Complete sequence of Chlorobium phaeobacteroides DSM 266.</title>
        <authorList>
            <consortium name="US DOE Joint Genome Institute"/>
            <person name="Copeland A."/>
            <person name="Lucas S."/>
            <person name="Lapidus A."/>
            <person name="Barry K."/>
            <person name="Detter J.C."/>
            <person name="Glavina del Rio T."/>
            <person name="Hammon N."/>
            <person name="Israni S."/>
            <person name="Pitluck S."/>
            <person name="Goltsman E."/>
            <person name="Schmutz J."/>
            <person name="Larimer F."/>
            <person name="Land M."/>
            <person name="Hauser L."/>
            <person name="Mikhailova N."/>
            <person name="Li T."/>
            <person name="Overmann J."/>
            <person name="Bryant D.A."/>
            <person name="Richardson P."/>
        </authorList>
    </citation>
    <scope>NUCLEOTIDE SEQUENCE [LARGE SCALE GENOMIC DNA]</scope>
    <source>
        <strain>DSM 266 / SMG 266 / 2430</strain>
    </source>
</reference>
<gene>
    <name evidence="1" type="primary">rpmG</name>
    <name type="ordered locus">Cpha266_1725</name>
</gene>
<evidence type="ECO:0000255" key="1">
    <source>
        <dbReference type="HAMAP-Rule" id="MF_00294"/>
    </source>
</evidence>
<evidence type="ECO:0000305" key="2"/>
<comment type="similarity">
    <text evidence="1">Belongs to the bacterial ribosomal protein bL33 family.</text>
</comment>
<protein>
    <recommendedName>
        <fullName evidence="1">Large ribosomal subunit protein bL33</fullName>
    </recommendedName>
    <alternativeName>
        <fullName evidence="2">50S ribosomal protein L33</fullName>
    </alternativeName>
</protein>
<sequence>MAKGKENRIVITLECTEAKKEGKTVSRYTTTKNKKNTTERLLLKKYNPNLQRHTIHKEIK</sequence>
<dbReference type="EMBL" id="CP000492">
    <property type="protein sequence ID" value="ABL65742.1"/>
    <property type="molecule type" value="Genomic_DNA"/>
</dbReference>
<dbReference type="RefSeq" id="WP_011745551.1">
    <property type="nucleotide sequence ID" value="NC_008639.1"/>
</dbReference>
<dbReference type="SMR" id="A1BH65"/>
<dbReference type="STRING" id="290317.Cpha266_1725"/>
<dbReference type="KEGG" id="cph:Cpha266_1725"/>
<dbReference type="eggNOG" id="COG0267">
    <property type="taxonomic scope" value="Bacteria"/>
</dbReference>
<dbReference type="HOGENOM" id="CLU_190949_3_0_10"/>
<dbReference type="Proteomes" id="UP000008701">
    <property type="component" value="Chromosome"/>
</dbReference>
<dbReference type="GO" id="GO:0005737">
    <property type="term" value="C:cytoplasm"/>
    <property type="evidence" value="ECO:0007669"/>
    <property type="project" value="UniProtKB-ARBA"/>
</dbReference>
<dbReference type="GO" id="GO:1990904">
    <property type="term" value="C:ribonucleoprotein complex"/>
    <property type="evidence" value="ECO:0007669"/>
    <property type="project" value="UniProtKB-KW"/>
</dbReference>
<dbReference type="GO" id="GO:0005840">
    <property type="term" value="C:ribosome"/>
    <property type="evidence" value="ECO:0007669"/>
    <property type="project" value="UniProtKB-KW"/>
</dbReference>
<dbReference type="GO" id="GO:0003735">
    <property type="term" value="F:structural constituent of ribosome"/>
    <property type="evidence" value="ECO:0007669"/>
    <property type="project" value="InterPro"/>
</dbReference>
<dbReference type="GO" id="GO:0006412">
    <property type="term" value="P:translation"/>
    <property type="evidence" value="ECO:0007669"/>
    <property type="project" value="UniProtKB-UniRule"/>
</dbReference>
<dbReference type="Gene3D" id="2.20.28.120">
    <property type="entry name" value="Ribosomal protein L33"/>
    <property type="match status" value="1"/>
</dbReference>
<dbReference type="HAMAP" id="MF_00294">
    <property type="entry name" value="Ribosomal_bL33"/>
    <property type="match status" value="1"/>
</dbReference>
<dbReference type="InterPro" id="IPR001705">
    <property type="entry name" value="Ribosomal_bL33"/>
</dbReference>
<dbReference type="InterPro" id="IPR038584">
    <property type="entry name" value="Ribosomal_bL33_sf"/>
</dbReference>
<dbReference type="InterPro" id="IPR011332">
    <property type="entry name" value="Ribosomal_zn-bd"/>
</dbReference>
<dbReference type="NCBIfam" id="NF001764">
    <property type="entry name" value="PRK00504.1"/>
    <property type="match status" value="1"/>
</dbReference>
<dbReference type="NCBIfam" id="NF001860">
    <property type="entry name" value="PRK00595.1"/>
    <property type="match status" value="1"/>
</dbReference>
<dbReference type="NCBIfam" id="TIGR01023">
    <property type="entry name" value="rpmG_bact"/>
    <property type="match status" value="1"/>
</dbReference>
<dbReference type="PANTHER" id="PTHR43168">
    <property type="entry name" value="50S RIBOSOMAL PROTEIN L33, CHLOROPLASTIC"/>
    <property type="match status" value="1"/>
</dbReference>
<dbReference type="PANTHER" id="PTHR43168:SF2">
    <property type="entry name" value="LARGE RIBOSOMAL SUBUNIT PROTEIN BL33C"/>
    <property type="match status" value="1"/>
</dbReference>
<dbReference type="Pfam" id="PF00471">
    <property type="entry name" value="Ribosomal_L33"/>
    <property type="match status" value="1"/>
</dbReference>
<dbReference type="SUPFAM" id="SSF57829">
    <property type="entry name" value="Zn-binding ribosomal proteins"/>
    <property type="match status" value="1"/>
</dbReference>
<organism>
    <name type="scientific">Chlorobium phaeobacteroides (strain DSM 266 / SMG 266 / 2430)</name>
    <dbReference type="NCBI Taxonomy" id="290317"/>
    <lineage>
        <taxon>Bacteria</taxon>
        <taxon>Pseudomonadati</taxon>
        <taxon>Chlorobiota</taxon>
        <taxon>Chlorobiia</taxon>
        <taxon>Chlorobiales</taxon>
        <taxon>Chlorobiaceae</taxon>
        <taxon>Chlorobium/Pelodictyon group</taxon>
        <taxon>Chlorobium</taxon>
    </lineage>
</organism>
<accession>A1BH65</accession>
<keyword id="KW-1185">Reference proteome</keyword>
<keyword id="KW-0687">Ribonucleoprotein</keyword>
<keyword id="KW-0689">Ribosomal protein</keyword>
<name>RL33_CHLPD</name>